<evidence type="ECO:0000250" key="1">
    <source>
        <dbReference type="UniProtKB" id="P02649"/>
    </source>
</evidence>
<evidence type="ECO:0000250" key="2">
    <source>
        <dbReference type="UniProtKB" id="P08226"/>
    </source>
</evidence>
<evidence type="ECO:0000255" key="3"/>
<evidence type="ECO:0000305" key="4"/>
<organism>
    <name type="scientific">Macaca nemestrina</name>
    <name type="common">Pig-tailed macaque</name>
    <dbReference type="NCBI Taxonomy" id="9545"/>
    <lineage>
        <taxon>Eukaryota</taxon>
        <taxon>Metazoa</taxon>
        <taxon>Chordata</taxon>
        <taxon>Craniata</taxon>
        <taxon>Vertebrata</taxon>
        <taxon>Euteleostomi</taxon>
        <taxon>Mammalia</taxon>
        <taxon>Eutheria</taxon>
        <taxon>Euarchontoglires</taxon>
        <taxon>Primates</taxon>
        <taxon>Haplorrhini</taxon>
        <taxon>Catarrhini</taxon>
        <taxon>Cercopithecidae</taxon>
        <taxon>Cercopithecinae</taxon>
        <taxon>Macaca</taxon>
    </lineage>
</organism>
<proteinExistence type="inferred from homology"/>
<gene>
    <name type="primary">APOE</name>
</gene>
<dbReference type="EMBL" id="JZLF01080368">
    <property type="status" value="NOT_ANNOTATED_CDS"/>
    <property type="molecule type" value="Genomic_DNA"/>
</dbReference>
<dbReference type="SMR" id="P0DO94"/>
<dbReference type="STRING" id="9545.ENSMNEP00000017988"/>
<dbReference type="GlyCosmos" id="P0DO94">
    <property type="glycosylation" value="1 site, No reported glycans"/>
</dbReference>
<dbReference type="Ensembl" id="ENSMNET00000042220.1">
    <property type="protein sequence ID" value="ENSMNEP00000017988.1"/>
    <property type="gene ID" value="ENSMNEG00000032951.1"/>
</dbReference>
<dbReference type="GeneTree" id="ENSGT00950000182929"/>
<dbReference type="OMA" id="GHMTDAR"/>
<dbReference type="Proteomes" id="UP000233120">
    <property type="component" value="Unassembled WGS sequence"/>
</dbReference>
<dbReference type="Bgee" id="ENSMNEG00000032951">
    <property type="expression patterns" value="Expressed in liver and 12 other cell types or tissues"/>
</dbReference>
<dbReference type="GO" id="GO:0034360">
    <property type="term" value="C:chylomicron remnant"/>
    <property type="evidence" value="ECO:0007669"/>
    <property type="project" value="Ensembl"/>
</dbReference>
<dbReference type="GO" id="GO:0005783">
    <property type="term" value="C:endoplasmic reticulum"/>
    <property type="evidence" value="ECO:0007669"/>
    <property type="project" value="Ensembl"/>
</dbReference>
<dbReference type="GO" id="GO:0070062">
    <property type="term" value="C:extracellular exosome"/>
    <property type="evidence" value="ECO:0000250"/>
    <property type="project" value="UniProtKB"/>
</dbReference>
<dbReference type="GO" id="GO:0031012">
    <property type="term" value="C:extracellular matrix"/>
    <property type="evidence" value="ECO:0000250"/>
    <property type="project" value="UniProtKB"/>
</dbReference>
<dbReference type="GO" id="GO:0005615">
    <property type="term" value="C:extracellular space"/>
    <property type="evidence" value="ECO:0000250"/>
    <property type="project" value="UniProtKB"/>
</dbReference>
<dbReference type="GO" id="GO:0098978">
    <property type="term" value="C:glutamatergic synapse"/>
    <property type="evidence" value="ECO:0007669"/>
    <property type="project" value="Ensembl"/>
</dbReference>
<dbReference type="GO" id="GO:0005794">
    <property type="term" value="C:Golgi apparatus"/>
    <property type="evidence" value="ECO:0007669"/>
    <property type="project" value="Ensembl"/>
</dbReference>
<dbReference type="GO" id="GO:0034364">
    <property type="term" value="C:high-density lipoprotein particle"/>
    <property type="evidence" value="ECO:0000250"/>
    <property type="project" value="UniProtKB"/>
</dbReference>
<dbReference type="GO" id="GO:0034363">
    <property type="term" value="C:intermediate-density lipoprotein particle"/>
    <property type="evidence" value="ECO:0000250"/>
    <property type="project" value="UniProtKB"/>
</dbReference>
<dbReference type="GO" id="GO:0034362">
    <property type="term" value="C:low-density lipoprotein particle"/>
    <property type="evidence" value="ECO:0000250"/>
    <property type="project" value="UniProtKB"/>
</dbReference>
<dbReference type="GO" id="GO:0042470">
    <property type="term" value="C:melanosome"/>
    <property type="evidence" value="ECO:0007669"/>
    <property type="project" value="Ensembl"/>
</dbReference>
<dbReference type="GO" id="GO:0097487">
    <property type="term" value="C:multivesicular body, internal vesicle"/>
    <property type="evidence" value="ECO:0000250"/>
    <property type="project" value="UniProtKB"/>
</dbReference>
<dbReference type="GO" id="GO:0005886">
    <property type="term" value="C:plasma membrane"/>
    <property type="evidence" value="ECO:0007669"/>
    <property type="project" value="GOC"/>
</dbReference>
<dbReference type="GO" id="GO:0043083">
    <property type="term" value="C:synaptic cleft"/>
    <property type="evidence" value="ECO:0007669"/>
    <property type="project" value="Ensembl"/>
</dbReference>
<dbReference type="GO" id="GO:0034361">
    <property type="term" value="C:very-low-density lipoprotein particle"/>
    <property type="evidence" value="ECO:0000250"/>
    <property type="project" value="UniProtKB"/>
</dbReference>
<dbReference type="GO" id="GO:0001540">
    <property type="term" value="F:amyloid-beta binding"/>
    <property type="evidence" value="ECO:0007669"/>
    <property type="project" value="Ensembl"/>
</dbReference>
<dbReference type="GO" id="GO:0016209">
    <property type="term" value="F:antioxidant activity"/>
    <property type="evidence" value="ECO:0007669"/>
    <property type="project" value="Ensembl"/>
</dbReference>
<dbReference type="GO" id="GO:0120020">
    <property type="term" value="F:cholesterol transfer activity"/>
    <property type="evidence" value="ECO:0007669"/>
    <property type="project" value="Ensembl"/>
</dbReference>
<dbReference type="GO" id="GO:0019899">
    <property type="term" value="F:enzyme binding"/>
    <property type="evidence" value="ECO:0007669"/>
    <property type="project" value="Ensembl"/>
</dbReference>
<dbReference type="GO" id="GO:0043395">
    <property type="term" value="F:heparan sulfate proteoglycan binding"/>
    <property type="evidence" value="ECO:0000250"/>
    <property type="project" value="UniProtKB"/>
</dbReference>
<dbReference type="GO" id="GO:0008201">
    <property type="term" value="F:heparin binding"/>
    <property type="evidence" value="ECO:0000250"/>
    <property type="project" value="UniProtKB"/>
</dbReference>
<dbReference type="GO" id="GO:0042802">
    <property type="term" value="F:identical protein binding"/>
    <property type="evidence" value="ECO:0000250"/>
    <property type="project" value="UniProtKB"/>
</dbReference>
<dbReference type="GO" id="GO:0071813">
    <property type="term" value="F:lipoprotein particle binding"/>
    <property type="evidence" value="ECO:0007669"/>
    <property type="project" value="Ensembl"/>
</dbReference>
<dbReference type="GO" id="GO:0050750">
    <property type="term" value="F:low-density lipoprotein particle receptor binding"/>
    <property type="evidence" value="ECO:0000250"/>
    <property type="project" value="UniProtKB"/>
</dbReference>
<dbReference type="GO" id="GO:0046911">
    <property type="term" value="F:metal chelating activity"/>
    <property type="evidence" value="ECO:0007669"/>
    <property type="project" value="Ensembl"/>
</dbReference>
<dbReference type="GO" id="GO:0060228">
    <property type="term" value="F:phosphatidylcholine-sterol O-acyltransferase activator activity"/>
    <property type="evidence" value="ECO:0007669"/>
    <property type="project" value="Ensembl"/>
</dbReference>
<dbReference type="GO" id="GO:0005543">
    <property type="term" value="F:phospholipid binding"/>
    <property type="evidence" value="ECO:0007669"/>
    <property type="project" value="Ensembl"/>
</dbReference>
<dbReference type="GO" id="GO:0042803">
    <property type="term" value="F:protein homodimerization activity"/>
    <property type="evidence" value="ECO:0007669"/>
    <property type="project" value="Ensembl"/>
</dbReference>
<dbReference type="GO" id="GO:0048018">
    <property type="term" value="F:receptor ligand activity"/>
    <property type="evidence" value="ECO:0007669"/>
    <property type="project" value="Ensembl"/>
</dbReference>
<dbReference type="GO" id="GO:0048156">
    <property type="term" value="F:tau protein binding"/>
    <property type="evidence" value="ECO:0007669"/>
    <property type="project" value="Ensembl"/>
</dbReference>
<dbReference type="GO" id="GO:0070326">
    <property type="term" value="F:very-low-density lipoprotein particle receptor binding"/>
    <property type="evidence" value="ECO:0007669"/>
    <property type="project" value="Ensembl"/>
</dbReference>
<dbReference type="GO" id="GO:0097113">
    <property type="term" value="P:AMPA glutamate receptor clustering"/>
    <property type="evidence" value="ECO:0007669"/>
    <property type="project" value="Ensembl"/>
</dbReference>
<dbReference type="GO" id="GO:0042982">
    <property type="term" value="P:amyloid precursor protein metabolic process"/>
    <property type="evidence" value="ECO:0007669"/>
    <property type="project" value="Ensembl"/>
</dbReference>
<dbReference type="GO" id="GO:0048844">
    <property type="term" value="P:artery morphogenesis"/>
    <property type="evidence" value="ECO:0007669"/>
    <property type="project" value="Ensembl"/>
</dbReference>
<dbReference type="GO" id="GO:0071402">
    <property type="term" value="P:cellular response to lipoprotein particle stimulus"/>
    <property type="evidence" value="ECO:0007669"/>
    <property type="project" value="Ensembl"/>
</dbReference>
<dbReference type="GO" id="GO:0006707">
    <property type="term" value="P:cholesterol catabolic process"/>
    <property type="evidence" value="ECO:0007669"/>
    <property type="project" value="Ensembl"/>
</dbReference>
<dbReference type="GO" id="GO:0033344">
    <property type="term" value="P:cholesterol efflux"/>
    <property type="evidence" value="ECO:0000250"/>
    <property type="project" value="UniProtKB"/>
</dbReference>
<dbReference type="GO" id="GO:0042632">
    <property type="term" value="P:cholesterol homeostasis"/>
    <property type="evidence" value="ECO:0007669"/>
    <property type="project" value="Ensembl"/>
</dbReference>
<dbReference type="GO" id="GO:0034382">
    <property type="term" value="P:chylomicron remnant clearance"/>
    <property type="evidence" value="ECO:0000250"/>
    <property type="project" value="UniProtKB"/>
</dbReference>
<dbReference type="GO" id="GO:0055089">
    <property type="term" value="P:fatty acid homeostasis"/>
    <property type="evidence" value="ECO:0007669"/>
    <property type="project" value="Ensembl"/>
</dbReference>
<dbReference type="GO" id="GO:0007186">
    <property type="term" value="P:G protein-coupled receptor signaling pathway"/>
    <property type="evidence" value="ECO:0007669"/>
    <property type="project" value="Ensembl"/>
</dbReference>
<dbReference type="GO" id="GO:0010467">
    <property type="term" value="P:gene expression"/>
    <property type="evidence" value="ECO:0007669"/>
    <property type="project" value="Ensembl"/>
</dbReference>
<dbReference type="GO" id="GO:0034380">
    <property type="term" value="P:high-density lipoprotein particle assembly"/>
    <property type="evidence" value="ECO:0000250"/>
    <property type="project" value="UniProtKB"/>
</dbReference>
<dbReference type="GO" id="GO:0034384">
    <property type="term" value="P:high-density lipoprotein particle clearance"/>
    <property type="evidence" value="ECO:0007669"/>
    <property type="project" value="Ensembl"/>
</dbReference>
<dbReference type="GO" id="GO:0034375">
    <property type="term" value="P:high-density lipoprotein particle remodeling"/>
    <property type="evidence" value="ECO:0007669"/>
    <property type="project" value="Ensembl"/>
</dbReference>
<dbReference type="GO" id="GO:0071831">
    <property type="term" value="P:intermediate-density lipoprotein particle clearance"/>
    <property type="evidence" value="ECO:0000250"/>
    <property type="project" value="UniProtKB"/>
</dbReference>
<dbReference type="GO" id="GO:0006874">
    <property type="term" value="P:intracellular calcium ion homeostasis"/>
    <property type="evidence" value="ECO:0007669"/>
    <property type="project" value="Ensembl"/>
</dbReference>
<dbReference type="GO" id="GO:0010877">
    <property type="term" value="P:lipid transport involved in lipid storage"/>
    <property type="evidence" value="ECO:0007669"/>
    <property type="project" value="Ensembl"/>
</dbReference>
<dbReference type="GO" id="GO:0042158">
    <property type="term" value="P:lipoprotein biosynthetic process"/>
    <property type="evidence" value="ECO:0000250"/>
    <property type="project" value="UniProtKB"/>
</dbReference>
<dbReference type="GO" id="GO:0042159">
    <property type="term" value="P:lipoprotein catabolic process"/>
    <property type="evidence" value="ECO:0007669"/>
    <property type="project" value="Ensembl"/>
</dbReference>
<dbReference type="GO" id="GO:0035641">
    <property type="term" value="P:locomotory exploration behavior"/>
    <property type="evidence" value="ECO:0007669"/>
    <property type="project" value="Ensembl"/>
</dbReference>
<dbReference type="GO" id="GO:0015909">
    <property type="term" value="P:long-chain fatty acid transport"/>
    <property type="evidence" value="ECO:0007669"/>
    <property type="project" value="Ensembl"/>
</dbReference>
<dbReference type="GO" id="GO:0007616">
    <property type="term" value="P:long-term memory"/>
    <property type="evidence" value="ECO:0007669"/>
    <property type="project" value="Ensembl"/>
</dbReference>
<dbReference type="GO" id="GO:0034374">
    <property type="term" value="P:low-density lipoprotein particle remodeling"/>
    <property type="evidence" value="ECO:0007669"/>
    <property type="project" value="Ensembl"/>
</dbReference>
<dbReference type="GO" id="GO:0051651">
    <property type="term" value="P:maintenance of location in cell"/>
    <property type="evidence" value="ECO:0007669"/>
    <property type="project" value="Ensembl"/>
</dbReference>
<dbReference type="GO" id="GO:0032438">
    <property type="term" value="P:melanosome organization"/>
    <property type="evidence" value="ECO:0000250"/>
    <property type="project" value="UniProtKB"/>
</dbReference>
<dbReference type="GO" id="GO:1905907">
    <property type="term" value="P:negative regulation of amyloid fibril formation"/>
    <property type="evidence" value="ECO:0000250"/>
    <property type="project" value="UniProtKB"/>
</dbReference>
<dbReference type="GO" id="GO:1902430">
    <property type="term" value="P:negative regulation of amyloid-beta formation"/>
    <property type="evidence" value="ECO:0007669"/>
    <property type="project" value="Ensembl"/>
</dbReference>
<dbReference type="GO" id="GO:0043537">
    <property type="term" value="P:negative regulation of blood vessel endothelial cell migration"/>
    <property type="evidence" value="ECO:0007669"/>
    <property type="project" value="Ensembl"/>
</dbReference>
<dbReference type="GO" id="GO:0090090">
    <property type="term" value="P:negative regulation of canonical Wnt signaling pathway"/>
    <property type="evidence" value="ECO:0007669"/>
    <property type="project" value="Ensembl"/>
</dbReference>
<dbReference type="GO" id="GO:0045541">
    <property type="term" value="P:negative regulation of cholesterol biosynthetic process"/>
    <property type="evidence" value="ECO:0007669"/>
    <property type="project" value="Ensembl"/>
</dbReference>
<dbReference type="GO" id="GO:0001937">
    <property type="term" value="P:negative regulation of endothelial cell proliferation"/>
    <property type="evidence" value="ECO:0007669"/>
    <property type="project" value="Ensembl"/>
</dbReference>
<dbReference type="GO" id="GO:0010629">
    <property type="term" value="P:negative regulation of gene expression"/>
    <property type="evidence" value="ECO:0007669"/>
    <property type="project" value="Ensembl"/>
</dbReference>
<dbReference type="GO" id="GO:0050728">
    <property type="term" value="P:negative regulation of inflammatory response"/>
    <property type="evidence" value="ECO:0007669"/>
    <property type="project" value="Ensembl"/>
</dbReference>
<dbReference type="GO" id="GO:1900272">
    <property type="term" value="P:negative regulation of long-term synaptic potentiation"/>
    <property type="evidence" value="ECO:0007669"/>
    <property type="project" value="Ensembl"/>
</dbReference>
<dbReference type="GO" id="GO:0010977">
    <property type="term" value="P:negative regulation of neuron projection development"/>
    <property type="evidence" value="ECO:0007669"/>
    <property type="project" value="Ensembl"/>
</dbReference>
<dbReference type="GO" id="GO:0010544">
    <property type="term" value="P:negative regulation of platelet activation"/>
    <property type="evidence" value="ECO:0007669"/>
    <property type="project" value="Ensembl"/>
</dbReference>
<dbReference type="GO" id="GO:0050709">
    <property type="term" value="P:negative regulation of protein secretion"/>
    <property type="evidence" value="ECO:0007669"/>
    <property type="project" value="Ensembl"/>
</dbReference>
<dbReference type="GO" id="GO:0048662">
    <property type="term" value="P:negative regulation of smooth muscle cell proliferation"/>
    <property type="evidence" value="ECO:0007669"/>
    <property type="project" value="Ensembl"/>
</dbReference>
<dbReference type="GO" id="GO:0090209">
    <property type="term" value="P:negative regulation of triglyceride metabolic process"/>
    <property type="evidence" value="ECO:0007669"/>
    <property type="project" value="Ensembl"/>
</dbReference>
<dbReference type="GO" id="GO:0031175">
    <property type="term" value="P:neuron projection development"/>
    <property type="evidence" value="ECO:0000250"/>
    <property type="project" value="UniProtKB"/>
</dbReference>
<dbReference type="GO" id="GO:0038060">
    <property type="term" value="P:nitric oxide-cGMP-mediated signaling"/>
    <property type="evidence" value="ECO:0007669"/>
    <property type="project" value="Ensembl"/>
</dbReference>
<dbReference type="GO" id="GO:0097114">
    <property type="term" value="P:NMDA glutamate receptor clustering"/>
    <property type="evidence" value="ECO:0007669"/>
    <property type="project" value="Ensembl"/>
</dbReference>
<dbReference type="GO" id="GO:0033700">
    <property type="term" value="P:phospholipid efflux"/>
    <property type="evidence" value="ECO:0007669"/>
    <property type="project" value="Ensembl"/>
</dbReference>
<dbReference type="GO" id="GO:0044794">
    <property type="term" value="P:positive regulation by host of viral process"/>
    <property type="evidence" value="ECO:0007669"/>
    <property type="project" value="Ensembl"/>
</dbReference>
<dbReference type="GO" id="GO:1900223">
    <property type="term" value="P:positive regulation of amyloid-beta clearance"/>
    <property type="evidence" value="ECO:0000250"/>
    <property type="project" value="UniProtKB"/>
</dbReference>
<dbReference type="GO" id="GO:0010875">
    <property type="term" value="P:positive regulation of cholesterol efflux"/>
    <property type="evidence" value="ECO:0007669"/>
    <property type="project" value="Ensembl"/>
</dbReference>
<dbReference type="GO" id="GO:0090205">
    <property type="term" value="P:positive regulation of cholesterol metabolic process"/>
    <property type="evidence" value="ECO:0007669"/>
    <property type="project" value="Ensembl"/>
</dbReference>
<dbReference type="GO" id="GO:0060999">
    <property type="term" value="P:positive regulation of dendritic spine development"/>
    <property type="evidence" value="ECO:0007669"/>
    <property type="project" value="Ensembl"/>
</dbReference>
<dbReference type="GO" id="GO:1902952">
    <property type="term" value="P:positive regulation of dendritic spine maintenance"/>
    <property type="evidence" value="ECO:0007669"/>
    <property type="project" value="Ensembl"/>
</dbReference>
<dbReference type="GO" id="GO:0045893">
    <property type="term" value="P:positive regulation of DNA-templated transcription"/>
    <property type="evidence" value="ECO:0007669"/>
    <property type="project" value="Ensembl"/>
</dbReference>
<dbReference type="GO" id="GO:0045807">
    <property type="term" value="P:positive regulation of endocytosis"/>
    <property type="evidence" value="ECO:0007669"/>
    <property type="project" value="Ensembl"/>
</dbReference>
<dbReference type="GO" id="GO:0070374">
    <property type="term" value="P:positive regulation of ERK1 and ERK2 cascade"/>
    <property type="evidence" value="ECO:0007669"/>
    <property type="project" value="Ensembl"/>
</dbReference>
<dbReference type="GO" id="GO:0046889">
    <property type="term" value="P:positive regulation of lipid biosynthetic process"/>
    <property type="evidence" value="ECO:0007669"/>
    <property type="project" value="Ensembl"/>
</dbReference>
<dbReference type="GO" id="GO:1903002">
    <property type="term" value="P:positive regulation of lipid transport across blood-brain barrier"/>
    <property type="evidence" value="ECO:0007669"/>
    <property type="project" value="Ensembl"/>
</dbReference>
<dbReference type="GO" id="GO:0140077">
    <property type="term" value="P:positive regulation of lipoprotein transport"/>
    <property type="evidence" value="ECO:0007669"/>
    <property type="project" value="Ensembl"/>
</dbReference>
<dbReference type="GO" id="GO:0032805">
    <property type="term" value="P:positive regulation of low-density lipoprotein particle receptor catabolic process"/>
    <property type="evidence" value="ECO:0007669"/>
    <property type="project" value="Ensembl"/>
</dbReference>
<dbReference type="GO" id="GO:0051044">
    <property type="term" value="P:positive regulation of membrane protein ectodomain proteolysis"/>
    <property type="evidence" value="ECO:0007669"/>
    <property type="project" value="Ensembl"/>
</dbReference>
<dbReference type="GO" id="GO:0010976">
    <property type="term" value="P:positive regulation of neuron projection development"/>
    <property type="evidence" value="ECO:0007669"/>
    <property type="project" value="Ensembl"/>
</dbReference>
<dbReference type="GO" id="GO:0045429">
    <property type="term" value="P:positive regulation of nitric oxide biosynthetic process"/>
    <property type="evidence" value="ECO:0007669"/>
    <property type="project" value="Ensembl"/>
</dbReference>
<dbReference type="GO" id="GO:1902995">
    <property type="term" value="P:positive regulation of phospholipid efflux"/>
    <property type="evidence" value="ECO:0007669"/>
    <property type="project" value="Ensembl"/>
</dbReference>
<dbReference type="GO" id="GO:0017038">
    <property type="term" value="P:protein import"/>
    <property type="evidence" value="ECO:0007669"/>
    <property type="project" value="Ensembl"/>
</dbReference>
<dbReference type="GO" id="GO:0006898">
    <property type="term" value="P:receptor-mediated endocytosis"/>
    <property type="evidence" value="ECO:0007669"/>
    <property type="project" value="Ensembl"/>
</dbReference>
<dbReference type="GO" id="GO:0042981">
    <property type="term" value="P:regulation of apoptotic process"/>
    <property type="evidence" value="ECO:0007669"/>
    <property type="project" value="Ensembl"/>
</dbReference>
<dbReference type="GO" id="GO:2000822">
    <property type="term" value="P:regulation of behavioral fear response"/>
    <property type="evidence" value="ECO:0007669"/>
    <property type="project" value="Ensembl"/>
</dbReference>
<dbReference type="GO" id="GO:0032489">
    <property type="term" value="P:regulation of Cdc42 protein signal transduction"/>
    <property type="evidence" value="ECO:0007669"/>
    <property type="project" value="Ensembl"/>
</dbReference>
<dbReference type="GO" id="GO:1905890">
    <property type="term" value="P:regulation of cellular response to very-low-density lipoprotein particle stimulus"/>
    <property type="evidence" value="ECO:0007669"/>
    <property type="project" value="Ensembl"/>
</dbReference>
<dbReference type="GO" id="GO:0045088">
    <property type="term" value="P:regulation of innate immune response"/>
    <property type="evidence" value="ECO:0007669"/>
    <property type="project" value="Ensembl"/>
</dbReference>
<dbReference type="GO" id="GO:0061136">
    <property type="term" value="P:regulation of proteasomal protein catabolic process"/>
    <property type="evidence" value="ECO:0007669"/>
    <property type="project" value="Ensembl"/>
</dbReference>
<dbReference type="GO" id="GO:0043254">
    <property type="term" value="P:regulation of protein-containing complex assembly"/>
    <property type="evidence" value="ECO:0007669"/>
    <property type="project" value="Ensembl"/>
</dbReference>
<dbReference type="GO" id="GO:0061771">
    <property type="term" value="P:response to caloric restriction"/>
    <property type="evidence" value="ECO:0007669"/>
    <property type="project" value="Ensembl"/>
</dbReference>
<dbReference type="GO" id="GO:0002021">
    <property type="term" value="P:response to dietary excess"/>
    <property type="evidence" value="ECO:0007669"/>
    <property type="project" value="Ensembl"/>
</dbReference>
<dbReference type="GO" id="GO:0006979">
    <property type="term" value="P:response to oxidative stress"/>
    <property type="evidence" value="ECO:0007669"/>
    <property type="project" value="Ensembl"/>
</dbReference>
<dbReference type="GO" id="GO:0043691">
    <property type="term" value="P:reverse cholesterol transport"/>
    <property type="evidence" value="ECO:0007669"/>
    <property type="project" value="Ensembl"/>
</dbReference>
<dbReference type="GO" id="GO:0070328">
    <property type="term" value="P:triglyceride homeostasis"/>
    <property type="evidence" value="ECO:0007669"/>
    <property type="project" value="Ensembl"/>
</dbReference>
<dbReference type="GO" id="GO:0006641">
    <property type="term" value="P:triglyceride metabolic process"/>
    <property type="evidence" value="ECO:0007669"/>
    <property type="project" value="Ensembl"/>
</dbReference>
<dbReference type="GO" id="GO:0071830">
    <property type="term" value="P:triglyceride-rich lipoprotein particle clearance"/>
    <property type="evidence" value="ECO:0000250"/>
    <property type="project" value="UniProtKB"/>
</dbReference>
<dbReference type="GO" id="GO:0042311">
    <property type="term" value="P:vasodilation"/>
    <property type="evidence" value="ECO:0007669"/>
    <property type="project" value="Ensembl"/>
</dbReference>
<dbReference type="GO" id="GO:0034447">
    <property type="term" value="P:very-low-density lipoprotein particle clearance"/>
    <property type="evidence" value="ECO:0000250"/>
    <property type="project" value="UniProtKB"/>
</dbReference>
<dbReference type="GO" id="GO:0034372">
    <property type="term" value="P:very-low-density lipoprotein particle remodeling"/>
    <property type="evidence" value="ECO:0007669"/>
    <property type="project" value="Ensembl"/>
</dbReference>
<dbReference type="GO" id="GO:0019068">
    <property type="term" value="P:virion assembly"/>
    <property type="evidence" value="ECO:0007669"/>
    <property type="project" value="Ensembl"/>
</dbReference>
<dbReference type="FunFam" id="1.20.120.20:FF:000002">
    <property type="entry name" value="Apolipoprotein E"/>
    <property type="match status" value="1"/>
</dbReference>
<dbReference type="FunFam" id="1.20.120.20:FF:000003">
    <property type="entry name" value="Apolipoprotein E"/>
    <property type="match status" value="1"/>
</dbReference>
<dbReference type="Gene3D" id="1.20.120.20">
    <property type="entry name" value="Apolipoprotein"/>
    <property type="match status" value="2"/>
</dbReference>
<dbReference type="InterPro" id="IPR000074">
    <property type="entry name" value="ApoA_E"/>
</dbReference>
<dbReference type="InterPro" id="IPR050163">
    <property type="entry name" value="Apolipoprotein_A1/A4/E"/>
</dbReference>
<dbReference type="PANTHER" id="PTHR18976">
    <property type="entry name" value="APOLIPOPROTEIN"/>
    <property type="match status" value="1"/>
</dbReference>
<dbReference type="PANTHER" id="PTHR18976:SF2">
    <property type="entry name" value="APOLIPOPROTEIN E"/>
    <property type="match status" value="1"/>
</dbReference>
<dbReference type="Pfam" id="PF01442">
    <property type="entry name" value="Apolipoprotein"/>
    <property type="match status" value="1"/>
</dbReference>
<dbReference type="SUPFAM" id="SSF58113">
    <property type="entry name" value="Apolipoprotein A-I"/>
    <property type="match status" value="1"/>
</dbReference>
<sequence length="317" mass="35892">MKVLWAALLVTFLAGCQAKVEQPVEPETEPELRQQAEGQSGQPWELALGRFWDYLRWVQTLSEQVQEELLSPQVTQELTTLMDETMKELKAYKSELEEQLSPVAEETRARLSKELQAAQARLGADMEDVRSRLVQYRSEVQAMLGQSTEELRARLASHLRKLRKRLLRDADDLQKRLAVYQAGAREGAERGVSAIRERLGPLVEQGRVRAATVGSLASQPLQERAQALGERLRARMEEMGSRTRDRLDEVKEQVAEVRAKLEEQAQQISLQAEAFQARLKSWFEPLVEDMQRQWAGLVEKVQAAVGASTAPVPSDNH</sequence>
<protein>
    <recommendedName>
        <fullName>Apolipoprotein E</fullName>
        <shortName>Apo-E</shortName>
    </recommendedName>
</protein>
<name>APOE_MACNE</name>
<reference key="1">
    <citation type="submission" date="2015-03" db="EMBL/GenBank/DDBJ databases">
        <authorList>
            <person name="Hughes D.S."/>
            <person name="Liu Y."/>
            <person name="Murali S."/>
            <person name="Raveendran M."/>
            <person name="Korchina V."/>
            <person name="Wang M."/>
            <person name="Jhangiani S."/>
            <person name="Bandaranaike D."/>
            <person name="Bellair M."/>
            <person name="Blankenburg K."/>
            <person name="Chao H."/>
            <person name="Dahdouli M."/>
            <person name="Dinh H."/>
            <person name="Doddapaneni H."/>
            <person name="English A."/>
            <person name="Gnanaolivu R."/>
            <person name="Gross S."/>
            <person name="Jayaseelan J."/>
            <person name="Jones J."/>
            <person name="Khan Z."/>
            <person name="Kovar C."/>
            <person name="Kurapati P."/>
            <person name="Le B."/>
            <person name="Lee S."/>
            <person name="Matakis S."/>
            <person name="Mathew T."/>
            <person name="Narasimhan A."/>
            <person name="Ngo D."/>
            <person name="Okwuonu G."/>
            <person name="Ongeri F."/>
            <person name="Osuji N."/>
            <person name="Otenyo P."/>
            <person name="Patel E."/>
            <person name="Qu C."/>
            <person name="Quiroz J."/>
            <person name="Raj R."/>
            <person name="Rajbhandari K."/>
            <person name="Reid J.G."/>
            <person name="Santibanez J."/>
            <person name="Skinner E."/>
            <person name="Vee V."/>
            <person name="Wang Y."/>
            <person name="Weissenberger G."/>
            <person name="Xin Y."/>
            <person name="Zou X."/>
            <person name="Han Y."/>
            <person name="Muzny D.M."/>
            <person name="Richards S."/>
            <person name="Worley K.C."/>
            <person name="Rogers J."/>
            <person name="Gibbs R.A."/>
        </authorList>
    </citation>
    <scope>NUCLEOTIDE SEQUENCE [LARGE SCALE GENOMIC DNA]</scope>
</reference>
<reference key="2">
    <citation type="unpublished observations" date="2016-03">
        <authorList>
            <person name="Puppione D.L."/>
        </authorList>
    </citation>
    <scope>IDENTIFICATION</scope>
</reference>
<accession>P0DO94</accession>
<comment type="function">
    <text evidence="1">APOE is an apolipoprotein, a protein associating with lipid particles, that mainly functions in lipoprotein-mediated lipid transport between organs via the plasma and interstitial fluids. APOE is a core component of plasma lipoproteins and is involved in their production, conversion and clearance. Apolipoproteins are amphipathic molecules that interact both with lipids of the lipoprotein particle core and the aqueous environment of the plasma. As such, APOE associates with chylomicrons, chylomicron remnants, very low density lipoproteins (VLDL) and intermediate density lipoproteins (IDL) but shows a preferential binding to high-density lipoproteins (HDL). It also binds a wide range of cellular receptors including the LDL receptor/LDLR, the LDL receptor-related proteins LRP1, LRP2 and LRP8 and the very low-density lipoprotein receptor/VLDLR that mediate the cellular uptake of the APOE-containing lipoprotein particles. Finally, APOE also has a heparin-binding activity and binds heparan-sulfate proteoglycans on the surface of cells, a property that supports the capture and the receptor-mediated uptake of APOE-containing lipoproteins by cells. A main function of APOE is to mediate lipoprotein clearance through the uptake of chylomicrons, VLDLs, and HDLs by hepatocytes. APOE is also involved in the biosynthesis by the liver of VLDLs as well as their uptake by peripheral tissues ensuring the delivery of triglycerides and energy storage in muscle, heart and adipose tissues. By participating in the lipoprotein-mediated distribution of lipids among tissues, APOE plays a critical role in plasma and tissues lipid homeostasis. APOE is also involved in two steps of reverse cholesterol transport, the HDLs-mediated transport of cholesterol from peripheral tissues to the liver, and thereby plays an important role in cholesterol homeostasis. First, it is functionally associated with ABCA1 in the biogenesis of HDLs in tissues. Second, it is enriched in circulating HDLs and mediates their uptake by hepatocytes. APOE also plays an important role in lipid transport in the central nervous system, regulating neuron survival and sprouting.</text>
</comment>
<comment type="subunit">
    <text evidence="1">Homotetramer. May interact with ABCA1; functionally associated with ABCA1 in the biogenesis of HDLs. May interact with APP/A4 amyloid-beta peptide; the interaction is extremely stable in vitro but its physiological significance is unclear. May interact with MAPT. May interact with MAP2. In the cerebrospinal fluid, interacts with secreted SORL1. Interacts with PMEL; this allows the loading of PMEL luminal fragment on ILVs to induce fibril nucleation.</text>
</comment>
<comment type="subcellular location">
    <subcellularLocation>
        <location evidence="1">Secreted</location>
    </subcellularLocation>
    <subcellularLocation>
        <location evidence="1">Secreted</location>
        <location evidence="1">Extracellular space</location>
    </subcellularLocation>
    <subcellularLocation>
        <location evidence="1">Secreted</location>
        <location evidence="1">Extracellular space</location>
        <location evidence="1">Extracellular matrix</location>
    </subcellularLocation>
    <subcellularLocation>
        <location evidence="1">Extracellular vesicle</location>
    </subcellularLocation>
    <subcellularLocation>
        <location evidence="1">Endosome</location>
        <location evidence="1">Multivesicular body</location>
    </subcellularLocation>
    <text evidence="1">In the plasma, APOE is associated with chylomicrons, chylomicrons remnants, VLDL, LDL and HDL lipoproteins. Lipid poor oligomeric APOE is associated with the extracellular matrix in a calcium- and heparan-sulfate proteoglycans-dependent manner. Lipidation induces the release from the extracellular matrix. Colocalizes with CD63 and PMEL at exosomes and in intraluminal vesicles within multivesicular endosomes.</text>
</comment>
<comment type="PTM">
    <text evidence="1">APOE exists as multiple glycosylated and sialylated glycoforms within cells and in plasma. The extent of glycosylation and sialylation are tissue and context specific.</text>
</comment>
<comment type="PTM">
    <text evidence="1">Glycated in plasma VLDL.</text>
</comment>
<comment type="PTM">
    <text evidence="1">Phosphorylated by FAM20C in the extracellular medium.</text>
</comment>
<comment type="similarity">
    <text evidence="4">Belongs to the apolipoprotein A1/A4/E family.</text>
</comment>
<feature type="signal peptide" evidence="3">
    <location>
        <begin position="1"/>
        <end position="18"/>
    </location>
</feature>
<feature type="chain" id="PRO_0000436232" description="Apolipoprotein E">
    <location>
        <begin position="19"/>
        <end position="317"/>
    </location>
</feature>
<feature type="repeat" description="1">
    <location>
        <begin position="80"/>
        <end position="101"/>
    </location>
</feature>
<feature type="repeat" description="2">
    <location>
        <begin position="102"/>
        <end position="123"/>
    </location>
</feature>
<feature type="repeat" description="3">
    <location>
        <begin position="124"/>
        <end position="145"/>
    </location>
</feature>
<feature type="repeat" description="4">
    <location>
        <begin position="146"/>
        <end position="167"/>
    </location>
</feature>
<feature type="repeat" description="5">
    <location>
        <begin position="168"/>
        <end position="189"/>
    </location>
</feature>
<feature type="repeat" description="6">
    <location>
        <begin position="190"/>
        <end position="211"/>
    </location>
</feature>
<feature type="repeat" description="7">
    <location>
        <begin position="212"/>
        <end position="233"/>
    </location>
</feature>
<feature type="repeat" description="8">
    <location>
        <begin position="234"/>
        <end position="255"/>
    </location>
</feature>
<feature type="region of interest" description="8 X 22 AA approximate tandem repeats">
    <location>
        <begin position="80"/>
        <end position="255"/>
    </location>
</feature>
<feature type="region of interest" description="LDL and other lipoprotein receptors binding" evidence="1">
    <location>
        <begin position="158"/>
        <end position="168"/>
    </location>
</feature>
<feature type="region of interest" description="Lipid-binding and lipoprotein association" evidence="1">
    <location>
        <begin position="210"/>
        <end position="290"/>
    </location>
</feature>
<feature type="region of interest" description="Homooligomerization" evidence="1">
    <location>
        <begin position="266"/>
        <end position="317"/>
    </location>
</feature>
<feature type="region of interest" description="Specificity for association with VLDL" evidence="1">
    <location>
        <begin position="278"/>
        <end position="290"/>
    </location>
</feature>
<feature type="binding site" evidence="1">
    <location>
        <begin position="162"/>
        <end position="165"/>
    </location>
    <ligand>
        <name>heparin</name>
        <dbReference type="ChEBI" id="CHEBI:28304"/>
    </ligand>
</feature>
<feature type="binding site" evidence="1">
    <location>
        <begin position="229"/>
        <end position="236"/>
    </location>
    <ligand>
        <name>heparin</name>
        <dbReference type="ChEBI" id="CHEBI:28304"/>
    </ligand>
</feature>
<feature type="modified residue" description="Methionine sulfoxide" evidence="2">
    <location>
        <position position="143"/>
    </location>
</feature>
<feature type="modified residue" description="Phosphoserine" evidence="1">
    <location>
        <position position="147"/>
    </location>
</feature>
<feature type="glycosylation site" description="O-linked (GalNAc...) threonine" evidence="1">
    <location>
        <position position="212"/>
    </location>
</feature>
<keyword id="KW-0162">Chylomicron</keyword>
<keyword id="KW-0967">Endosome</keyword>
<keyword id="KW-0272">Extracellular matrix</keyword>
<keyword id="KW-0325">Glycoprotein</keyword>
<keyword id="KW-0345">HDL</keyword>
<keyword id="KW-0358">Heparin-binding</keyword>
<keyword id="KW-0445">Lipid transport</keyword>
<keyword id="KW-0446">Lipid-binding</keyword>
<keyword id="KW-0558">Oxidation</keyword>
<keyword id="KW-0597">Phosphoprotein</keyword>
<keyword id="KW-1185">Reference proteome</keyword>
<keyword id="KW-0677">Repeat</keyword>
<keyword id="KW-0964">Secreted</keyword>
<keyword id="KW-0732">Signal</keyword>
<keyword id="KW-0813">Transport</keyword>
<keyword id="KW-0850">VLDL</keyword>